<proteinExistence type="inferred from homology"/>
<dbReference type="EC" id="6.1.1.4" evidence="1"/>
<dbReference type="EMBL" id="CP000560">
    <property type="protein sequence ID" value="ABS75083.1"/>
    <property type="molecule type" value="Genomic_DNA"/>
</dbReference>
<dbReference type="RefSeq" id="WP_012118235.1">
    <property type="nucleotide sequence ID" value="NC_009725.2"/>
</dbReference>
<dbReference type="SMR" id="A7Z7V7"/>
<dbReference type="GeneID" id="93081865"/>
<dbReference type="KEGG" id="bay:RBAM_027250"/>
<dbReference type="HOGENOM" id="CLU_004427_0_0_9"/>
<dbReference type="Proteomes" id="UP000001120">
    <property type="component" value="Chromosome"/>
</dbReference>
<dbReference type="GO" id="GO:0005829">
    <property type="term" value="C:cytosol"/>
    <property type="evidence" value="ECO:0007669"/>
    <property type="project" value="TreeGrafter"/>
</dbReference>
<dbReference type="GO" id="GO:0002161">
    <property type="term" value="F:aminoacyl-tRNA deacylase activity"/>
    <property type="evidence" value="ECO:0007669"/>
    <property type="project" value="InterPro"/>
</dbReference>
<dbReference type="GO" id="GO:0005524">
    <property type="term" value="F:ATP binding"/>
    <property type="evidence" value="ECO:0007669"/>
    <property type="project" value="UniProtKB-UniRule"/>
</dbReference>
<dbReference type="GO" id="GO:0004823">
    <property type="term" value="F:leucine-tRNA ligase activity"/>
    <property type="evidence" value="ECO:0007669"/>
    <property type="project" value="UniProtKB-UniRule"/>
</dbReference>
<dbReference type="GO" id="GO:0006429">
    <property type="term" value="P:leucyl-tRNA aminoacylation"/>
    <property type="evidence" value="ECO:0007669"/>
    <property type="project" value="UniProtKB-UniRule"/>
</dbReference>
<dbReference type="CDD" id="cd07958">
    <property type="entry name" value="Anticodon_Ia_Leu_BEm"/>
    <property type="match status" value="1"/>
</dbReference>
<dbReference type="CDD" id="cd00812">
    <property type="entry name" value="LeuRS_core"/>
    <property type="match status" value="1"/>
</dbReference>
<dbReference type="FunFam" id="3.10.20.590:FF:000001">
    <property type="entry name" value="Leucine--tRNA ligase"/>
    <property type="match status" value="1"/>
</dbReference>
<dbReference type="FunFam" id="3.40.50.620:FF:000056">
    <property type="entry name" value="Leucine--tRNA ligase"/>
    <property type="match status" value="1"/>
</dbReference>
<dbReference type="FunFam" id="3.40.50.620:FF:000077">
    <property type="entry name" value="Leucine--tRNA ligase"/>
    <property type="match status" value="1"/>
</dbReference>
<dbReference type="FunFam" id="1.10.730.10:FF:000011">
    <property type="entry name" value="Leucine--tRNA ligase chloroplastic/mitochondrial"/>
    <property type="match status" value="1"/>
</dbReference>
<dbReference type="Gene3D" id="3.10.20.590">
    <property type="match status" value="1"/>
</dbReference>
<dbReference type="Gene3D" id="3.40.50.620">
    <property type="entry name" value="HUPs"/>
    <property type="match status" value="2"/>
</dbReference>
<dbReference type="Gene3D" id="1.10.730.10">
    <property type="entry name" value="Isoleucyl-tRNA Synthetase, Domain 1"/>
    <property type="match status" value="1"/>
</dbReference>
<dbReference type="Gene3D" id="3.90.740.10">
    <property type="entry name" value="Valyl/Leucyl/Isoleucyl-tRNA synthetase, editing domain"/>
    <property type="match status" value="1"/>
</dbReference>
<dbReference type="HAMAP" id="MF_00049_B">
    <property type="entry name" value="Leu_tRNA_synth_B"/>
    <property type="match status" value="1"/>
</dbReference>
<dbReference type="InterPro" id="IPR001412">
    <property type="entry name" value="aa-tRNA-synth_I_CS"/>
</dbReference>
<dbReference type="InterPro" id="IPR002300">
    <property type="entry name" value="aa-tRNA-synth_Ia"/>
</dbReference>
<dbReference type="InterPro" id="IPR002302">
    <property type="entry name" value="Leu-tRNA-ligase"/>
</dbReference>
<dbReference type="InterPro" id="IPR025709">
    <property type="entry name" value="Leu_tRNA-synth_edit"/>
</dbReference>
<dbReference type="InterPro" id="IPR013155">
    <property type="entry name" value="M/V/L/I-tRNA-synth_anticd-bd"/>
</dbReference>
<dbReference type="InterPro" id="IPR015413">
    <property type="entry name" value="Methionyl/Leucyl_tRNA_Synth"/>
</dbReference>
<dbReference type="InterPro" id="IPR014729">
    <property type="entry name" value="Rossmann-like_a/b/a_fold"/>
</dbReference>
<dbReference type="InterPro" id="IPR009080">
    <property type="entry name" value="tRNAsynth_Ia_anticodon-bd"/>
</dbReference>
<dbReference type="InterPro" id="IPR009008">
    <property type="entry name" value="Val/Leu/Ile-tRNA-synth_edit"/>
</dbReference>
<dbReference type="NCBIfam" id="TIGR00396">
    <property type="entry name" value="leuS_bact"/>
    <property type="match status" value="1"/>
</dbReference>
<dbReference type="PANTHER" id="PTHR43740:SF2">
    <property type="entry name" value="LEUCINE--TRNA LIGASE, MITOCHONDRIAL"/>
    <property type="match status" value="1"/>
</dbReference>
<dbReference type="PANTHER" id="PTHR43740">
    <property type="entry name" value="LEUCYL-TRNA SYNTHETASE"/>
    <property type="match status" value="1"/>
</dbReference>
<dbReference type="Pfam" id="PF08264">
    <property type="entry name" value="Anticodon_1"/>
    <property type="match status" value="1"/>
</dbReference>
<dbReference type="Pfam" id="PF00133">
    <property type="entry name" value="tRNA-synt_1"/>
    <property type="match status" value="1"/>
</dbReference>
<dbReference type="Pfam" id="PF13603">
    <property type="entry name" value="tRNA-synt_1_2"/>
    <property type="match status" value="1"/>
</dbReference>
<dbReference type="Pfam" id="PF09334">
    <property type="entry name" value="tRNA-synt_1g"/>
    <property type="match status" value="1"/>
</dbReference>
<dbReference type="PRINTS" id="PR00985">
    <property type="entry name" value="TRNASYNTHLEU"/>
</dbReference>
<dbReference type="SUPFAM" id="SSF47323">
    <property type="entry name" value="Anticodon-binding domain of a subclass of class I aminoacyl-tRNA synthetases"/>
    <property type="match status" value="1"/>
</dbReference>
<dbReference type="SUPFAM" id="SSF52374">
    <property type="entry name" value="Nucleotidylyl transferase"/>
    <property type="match status" value="1"/>
</dbReference>
<dbReference type="SUPFAM" id="SSF50677">
    <property type="entry name" value="ValRS/IleRS/LeuRS editing domain"/>
    <property type="match status" value="1"/>
</dbReference>
<dbReference type="PROSITE" id="PS00178">
    <property type="entry name" value="AA_TRNA_LIGASE_I"/>
    <property type="match status" value="1"/>
</dbReference>
<feature type="chain" id="PRO_1000009291" description="Leucine--tRNA ligase">
    <location>
        <begin position="1"/>
        <end position="804"/>
    </location>
</feature>
<feature type="short sequence motif" description="'HIGH' region">
    <location>
        <begin position="40"/>
        <end position="51"/>
    </location>
</feature>
<feature type="short sequence motif" description="'KMSKS' region">
    <location>
        <begin position="576"/>
        <end position="580"/>
    </location>
</feature>
<feature type="binding site" evidence="1">
    <location>
        <position position="579"/>
    </location>
    <ligand>
        <name>ATP</name>
        <dbReference type="ChEBI" id="CHEBI:30616"/>
    </ligand>
</feature>
<gene>
    <name evidence="1" type="primary">leuS</name>
    <name type="ordered locus">RBAM_027250</name>
</gene>
<reference key="1">
    <citation type="journal article" date="2007" name="Nat. Biotechnol.">
        <title>Comparative analysis of the complete genome sequence of the plant growth-promoting bacterium Bacillus amyloliquefaciens FZB42.</title>
        <authorList>
            <person name="Chen X.H."/>
            <person name="Koumoutsi A."/>
            <person name="Scholz R."/>
            <person name="Eisenreich A."/>
            <person name="Schneider K."/>
            <person name="Heinemeyer I."/>
            <person name="Morgenstern B."/>
            <person name="Voss B."/>
            <person name="Hess W.R."/>
            <person name="Reva O."/>
            <person name="Junge H."/>
            <person name="Voigt B."/>
            <person name="Jungblut P.R."/>
            <person name="Vater J."/>
            <person name="Suessmuth R."/>
            <person name="Liesegang H."/>
            <person name="Strittmatter A."/>
            <person name="Gottschalk G."/>
            <person name="Borriss R."/>
        </authorList>
    </citation>
    <scope>NUCLEOTIDE SEQUENCE [LARGE SCALE GENOMIC DNA]</scope>
    <source>
        <strain>DSM 23117 / BGSC 10A6 / LMG 26770 / FZB42</strain>
    </source>
</reference>
<organism>
    <name type="scientific">Bacillus velezensis (strain DSM 23117 / BGSC 10A6 / LMG 26770 / FZB42)</name>
    <name type="common">Bacillus amyloliquefaciens subsp. plantarum</name>
    <dbReference type="NCBI Taxonomy" id="326423"/>
    <lineage>
        <taxon>Bacteria</taxon>
        <taxon>Bacillati</taxon>
        <taxon>Bacillota</taxon>
        <taxon>Bacilli</taxon>
        <taxon>Bacillales</taxon>
        <taxon>Bacillaceae</taxon>
        <taxon>Bacillus</taxon>
        <taxon>Bacillus amyloliquefaciens group</taxon>
    </lineage>
</organism>
<accession>A7Z7V7</accession>
<evidence type="ECO:0000255" key="1">
    <source>
        <dbReference type="HAMAP-Rule" id="MF_00049"/>
    </source>
</evidence>
<protein>
    <recommendedName>
        <fullName evidence="1">Leucine--tRNA ligase</fullName>
        <ecNumber evidence="1">6.1.1.4</ecNumber>
    </recommendedName>
    <alternativeName>
        <fullName evidence="1">Leucyl-tRNA synthetase</fullName>
        <shortName evidence="1">LeuRS</shortName>
    </alternativeName>
</protein>
<comment type="catalytic activity">
    <reaction evidence="1">
        <text>tRNA(Leu) + L-leucine + ATP = L-leucyl-tRNA(Leu) + AMP + diphosphate</text>
        <dbReference type="Rhea" id="RHEA:11688"/>
        <dbReference type="Rhea" id="RHEA-COMP:9613"/>
        <dbReference type="Rhea" id="RHEA-COMP:9622"/>
        <dbReference type="ChEBI" id="CHEBI:30616"/>
        <dbReference type="ChEBI" id="CHEBI:33019"/>
        <dbReference type="ChEBI" id="CHEBI:57427"/>
        <dbReference type="ChEBI" id="CHEBI:78442"/>
        <dbReference type="ChEBI" id="CHEBI:78494"/>
        <dbReference type="ChEBI" id="CHEBI:456215"/>
        <dbReference type="EC" id="6.1.1.4"/>
    </reaction>
</comment>
<comment type="subcellular location">
    <subcellularLocation>
        <location evidence="1">Cytoplasm</location>
    </subcellularLocation>
</comment>
<comment type="similarity">
    <text evidence="1">Belongs to the class-I aminoacyl-tRNA synthetase family.</text>
</comment>
<keyword id="KW-0030">Aminoacyl-tRNA synthetase</keyword>
<keyword id="KW-0067">ATP-binding</keyword>
<keyword id="KW-0963">Cytoplasm</keyword>
<keyword id="KW-0436">Ligase</keyword>
<keyword id="KW-0547">Nucleotide-binding</keyword>
<keyword id="KW-0648">Protein biosynthesis</keyword>
<sequence length="804" mass="91270">MSFQHEKIEKKWQNYWLDHKTFAVSEENDKPKFYALDMFPYPSGAGLHVGHPEGYTATDILSRMRRMQGYNVLHPMGWDAFGLPAEQYALDTGNDPAEFTKQNIDNFRRQIQSLGFSYDWDREINTTDPDYYKWTQWIFTKLYEKGLAYVDEVPVNWCPALGTVLANEEVIDGKSERGGHPVERRPMRQWMLKITAYADRLLEDLEDLDWPESIKDMQRNWIGRSEGANVHFAIDGTDDTFTVFTTRPDTLFGAAYAVLAPEHELVEAITTPEQKEAVDAYVKEVQAKSDLERTDLAKTKTGVFTGAYAVNPANGEKLPIWIADYVLASYGTGAVMAVPAHDERDFEFAKVFSLPVKEVVKGGNTEEEAYTGDGEHVNSGFLNGLKKAEAIEKMIAWLEETKNGEKKVTYRLRDWLFSRQRYWGEPIPVIHWEDGTSTAVPAEELPLILPKTDEIKPSGTGESPLANIKEWVEVTDPETGKKGRRETNTMPQWAGSCWYFLRFIDPKNPDQLASPEKLDKWLPVDIYIGGAEHAVLHLLYARFWHKFLYDIGVVPTKEPFQKLYNQGMILGENNEKMSKSRGNVVNPDEIVASHGADTLRLYEMFMGPLDASIAWSESGLDGARRFLDRVWRLFIEENGELTGKVTEGAGETLERVYHETVMKVTENFEALRFNTGISQLMVFINEAYKANELPREYIEGFVKLLSPIAPHLAEELWEKLGHEGSIAYEAWPAYDESKLVDDEVEIVVQLNGKVKAKLMVPADADKAALEQLAQADEKVKEQLEGKTIRKIIAVPGKLVNIVAN</sequence>
<name>SYL_BACVZ</name>